<comment type="function">
    <text evidence="1">Presumably involved in the processing and regular turnover of intracellular proteins. Catalyzes the removal of unsubstituted N-terminal amino acids from various peptides.</text>
</comment>
<comment type="catalytic activity">
    <reaction evidence="1">
        <text>Release of an N-terminal amino acid, Xaa-|-Yaa-, in which Xaa is preferably Leu, but may be other amino acids including Pro although not Arg or Lys, and Yaa may be Pro. Amino acid amides and methyl esters are also readily hydrolyzed, but rates on arylamides are exceedingly low.</text>
        <dbReference type="EC" id="3.4.11.1"/>
    </reaction>
</comment>
<comment type="catalytic activity">
    <reaction evidence="1">
        <text>Release of an N-terminal amino acid, preferentially leucine, but not glutamic or aspartic acids.</text>
        <dbReference type="EC" id="3.4.11.10"/>
    </reaction>
</comment>
<comment type="cofactor">
    <cofactor evidence="1">
        <name>Mn(2+)</name>
        <dbReference type="ChEBI" id="CHEBI:29035"/>
    </cofactor>
    <text evidence="1">Binds 2 manganese ions per subunit.</text>
</comment>
<comment type="subcellular location">
    <subcellularLocation>
        <location evidence="1">Cytoplasm</location>
    </subcellularLocation>
</comment>
<comment type="similarity">
    <text evidence="1">Belongs to the peptidase M17 family.</text>
</comment>
<proteinExistence type="inferred from homology"/>
<gene>
    <name evidence="1" type="primary">pepA</name>
    <name type="ordered locus">A1I_06015</name>
</gene>
<organism>
    <name type="scientific">Rickettsia bellii (strain OSU 85-389)</name>
    <dbReference type="NCBI Taxonomy" id="391896"/>
    <lineage>
        <taxon>Bacteria</taxon>
        <taxon>Pseudomonadati</taxon>
        <taxon>Pseudomonadota</taxon>
        <taxon>Alphaproteobacteria</taxon>
        <taxon>Rickettsiales</taxon>
        <taxon>Rickettsiaceae</taxon>
        <taxon>Rickettsieae</taxon>
        <taxon>Rickettsia</taxon>
        <taxon>belli group</taxon>
    </lineage>
</organism>
<reference key="1">
    <citation type="submission" date="2007-09" db="EMBL/GenBank/DDBJ databases">
        <title>Complete genome sequencing of Rickettsia bellii.</title>
        <authorList>
            <person name="Madan A."/>
            <person name="Lee H."/>
            <person name="Madan A."/>
            <person name="Yoon J.-G."/>
            <person name="Ryu G.-Y."/>
            <person name="Dasch G."/>
            <person name="Ereemeva M."/>
        </authorList>
    </citation>
    <scope>NUCLEOTIDE SEQUENCE [LARGE SCALE GENOMIC DNA]</scope>
    <source>
        <strain>OSU 85-389</strain>
    </source>
</reference>
<name>AMPA_RICB8</name>
<feature type="chain" id="PRO_1000019972" description="Probable cytosol aminopeptidase">
    <location>
        <begin position="1"/>
        <end position="502"/>
    </location>
</feature>
<feature type="active site" evidence="1">
    <location>
        <position position="277"/>
    </location>
</feature>
<feature type="active site" evidence="1">
    <location>
        <position position="351"/>
    </location>
</feature>
<feature type="binding site" evidence="1">
    <location>
        <position position="265"/>
    </location>
    <ligand>
        <name>Mn(2+)</name>
        <dbReference type="ChEBI" id="CHEBI:29035"/>
        <label>2</label>
    </ligand>
</feature>
<feature type="binding site" evidence="1">
    <location>
        <position position="270"/>
    </location>
    <ligand>
        <name>Mn(2+)</name>
        <dbReference type="ChEBI" id="CHEBI:29035"/>
        <label>1</label>
    </ligand>
</feature>
<feature type="binding site" evidence="1">
    <location>
        <position position="270"/>
    </location>
    <ligand>
        <name>Mn(2+)</name>
        <dbReference type="ChEBI" id="CHEBI:29035"/>
        <label>2</label>
    </ligand>
</feature>
<feature type="binding site" evidence="1">
    <location>
        <position position="288"/>
    </location>
    <ligand>
        <name>Mn(2+)</name>
        <dbReference type="ChEBI" id="CHEBI:29035"/>
        <label>2</label>
    </ligand>
</feature>
<feature type="binding site" evidence="1">
    <location>
        <position position="347"/>
    </location>
    <ligand>
        <name>Mn(2+)</name>
        <dbReference type="ChEBI" id="CHEBI:29035"/>
        <label>1</label>
    </ligand>
</feature>
<feature type="binding site" evidence="1">
    <location>
        <position position="349"/>
    </location>
    <ligand>
        <name>Mn(2+)</name>
        <dbReference type="ChEBI" id="CHEBI:29035"/>
        <label>1</label>
    </ligand>
</feature>
<feature type="binding site" evidence="1">
    <location>
        <position position="349"/>
    </location>
    <ligand>
        <name>Mn(2+)</name>
        <dbReference type="ChEBI" id="CHEBI:29035"/>
        <label>2</label>
    </ligand>
</feature>
<sequence>MLHVNFTEEESLNTQALIVFIDDKLKLDSELINLDQQHHGLISKTIANKLQFTGKYGQIKIIPSVVKSGEVKYLVLAGLGSEEKLTEVKIEELGGKILQNVTNAKIATIGLKIKNRISNFTSSHVASLIASGALLASYRFDKYRTTLKEADKFVVESFEISTDNNAEATKLFEVKKLIAEGVFFTRDISNEPSNIKTPQIYAERIADILEELNVDVSILGEREMKNLGMGALLGVGQGSQNESKLVVMEYQGTNKDAPYIALVGKGVIFDTGGISLKPSNNMHLMRYDMCGSAAVVGTMIAVASQELPVNIVGVVGLVENMPSGNAQRPGDVVTTMSGQTAEVLNTDAEGRLVLADAVWYAQEKFKPKCVIDVATLTGAIVVSLGPTYAGCFSNNDELADKLIKAGEEVNEKLWRMPLHEDYDAMINSDIADMANIGNVPGAAGSSTAAHFIKRFIQEGVEWAHLDIAGVANSNKPSSLGPKGAVGYGVRLLEKFIKENYEQ</sequence>
<protein>
    <recommendedName>
        <fullName evidence="1">Probable cytosol aminopeptidase</fullName>
        <ecNumber evidence="1">3.4.11.1</ecNumber>
    </recommendedName>
    <alternativeName>
        <fullName evidence="1">Leucine aminopeptidase</fullName>
        <shortName evidence="1">LAP</shortName>
        <ecNumber evidence="1">3.4.11.10</ecNumber>
    </alternativeName>
    <alternativeName>
        <fullName evidence="1">Leucyl aminopeptidase</fullName>
    </alternativeName>
</protein>
<accession>A8GXC3</accession>
<dbReference type="EC" id="3.4.11.1" evidence="1"/>
<dbReference type="EC" id="3.4.11.10" evidence="1"/>
<dbReference type="EMBL" id="CP000849">
    <property type="protein sequence ID" value="ABV79523.1"/>
    <property type="molecule type" value="Genomic_DNA"/>
</dbReference>
<dbReference type="RefSeq" id="WP_012152093.1">
    <property type="nucleotide sequence ID" value="NC_009883.1"/>
</dbReference>
<dbReference type="SMR" id="A8GXC3"/>
<dbReference type="KEGG" id="rbo:A1I_06015"/>
<dbReference type="HOGENOM" id="CLU_013734_6_0_5"/>
<dbReference type="GO" id="GO:0005737">
    <property type="term" value="C:cytoplasm"/>
    <property type="evidence" value="ECO:0007669"/>
    <property type="project" value="UniProtKB-SubCell"/>
</dbReference>
<dbReference type="GO" id="GO:0030145">
    <property type="term" value="F:manganese ion binding"/>
    <property type="evidence" value="ECO:0007669"/>
    <property type="project" value="UniProtKB-UniRule"/>
</dbReference>
<dbReference type="GO" id="GO:0070006">
    <property type="term" value="F:metalloaminopeptidase activity"/>
    <property type="evidence" value="ECO:0007669"/>
    <property type="project" value="InterPro"/>
</dbReference>
<dbReference type="GO" id="GO:0006508">
    <property type="term" value="P:proteolysis"/>
    <property type="evidence" value="ECO:0007669"/>
    <property type="project" value="UniProtKB-KW"/>
</dbReference>
<dbReference type="CDD" id="cd00433">
    <property type="entry name" value="Peptidase_M17"/>
    <property type="match status" value="1"/>
</dbReference>
<dbReference type="Gene3D" id="3.40.220.10">
    <property type="entry name" value="Leucine Aminopeptidase, subunit E, domain 1"/>
    <property type="match status" value="1"/>
</dbReference>
<dbReference type="Gene3D" id="3.40.630.10">
    <property type="entry name" value="Zn peptidases"/>
    <property type="match status" value="1"/>
</dbReference>
<dbReference type="HAMAP" id="MF_00181">
    <property type="entry name" value="Cytosol_peptidase_M17"/>
    <property type="match status" value="1"/>
</dbReference>
<dbReference type="InterPro" id="IPR011356">
    <property type="entry name" value="Leucine_aapep/pepB"/>
</dbReference>
<dbReference type="InterPro" id="IPR043472">
    <property type="entry name" value="Macro_dom-like"/>
</dbReference>
<dbReference type="InterPro" id="IPR000819">
    <property type="entry name" value="Peptidase_M17_C"/>
</dbReference>
<dbReference type="InterPro" id="IPR023042">
    <property type="entry name" value="Peptidase_M17_leu_NH2_pept"/>
</dbReference>
<dbReference type="InterPro" id="IPR008283">
    <property type="entry name" value="Peptidase_M17_N"/>
</dbReference>
<dbReference type="NCBIfam" id="NF002073">
    <property type="entry name" value="PRK00913.1-2"/>
    <property type="match status" value="1"/>
</dbReference>
<dbReference type="NCBIfam" id="NF002074">
    <property type="entry name" value="PRK00913.1-4"/>
    <property type="match status" value="1"/>
</dbReference>
<dbReference type="NCBIfam" id="NF002075">
    <property type="entry name" value="PRK00913.2-2"/>
    <property type="match status" value="1"/>
</dbReference>
<dbReference type="NCBIfam" id="NF002077">
    <property type="entry name" value="PRK00913.2-4"/>
    <property type="match status" value="1"/>
</dbReference>
<dbReference type="NCBIfam" id="NF002083">
    <property type="entry name" value="PRK00913.3-5"/>
    <property type="match status" value="1"/>
</dbReference>
<dbReference type="PANTHER" id="PTHR11963:SF23">
    <property type="entry name" value="CYTOSOL AMINOPEPTIDASE"/>
    <property type="match status" value="1"/>
</dbReference>
<dbReference type="PANTHER" id="PTHR11963">
    <property type="entry name" value="LEUCINE AMINOPEPTIDASE-RELATED"/>
    <property type="match status" value="1"/>
</dbReference>
<dbReference type="Pfam" id="PF00883">
    <property type="entry name" value="Peptidase_M17"/>
    <property type="match status" value="1"/>
</dbReference>
<dbReference type="Pfam" id="PF02789">
    <property type="entry name" value="Peptidase_M17_N"/>
    <property type="match status" value="1"/>
</dbReference>
<dbReference type="PRINTS" id="PR00481">
    <property type="entry name" value="LAMNOPPTDASE"/>
</dbReference>
<dbReference type="SUPFAM" id="SSF52949">
    <property type="entry name" value="Macro domain-like"/>
    <property type="match status" value="1"/>
</dbReference>
<dbReference type="SUPFAM" id="SSF53187">
    <property type="entry name" value="Zn-dependent exopeptidases"/>
    <property type="match status" value="1"/>
</dbReference>
<dbReference type="PROSITE" id="PS00631">
    <property type="entry name" value="CYTOSOL_AP"/>
    <property type="match status" value="1"/>
</dbReference>
<keyword id="KW-0031">Aminopeptidase</keyword>
<keyword id="KW-0963">Cytoplasm</keyword>
<keyword id="KW-0378">Hydrolase</keyword>
<keyword id="KW-0464">Manganese</keyword>
<keyword id="KW-0479">Metal-binding</keyword>
<keyword id="KW-0645">Protease</keyword>
<evidence type="ECO:0000255" key="1">
    <source>
        <dbReference type="HAMAP-Rule" id="MF_00181"/>
    </source>
</evidence>